<protein>
    <recommendedName>
        <fullName>Ras-related protein Rab-7L1</fullName>
    </recommendedName>
    <alternativeName>
        <fullName>Rab-7-like protein 1</fullName>
    </alternativeName>
    <alternativeName>
        <fullName evidence="2">Ras-related protein Rab-29</fullName>
    </alternativeName>
</protein>
<sequence length="204" mass="23117">MGSRDHLFKVLVVGDAAVGKTSLVQRYSQDSFSKHYKSTVGVDFALKVLQWSDSEMVRLQLWDIAGQERFTSMTRLYYRDASACVIMFDVTNATTFSNSQRWKQDLDSKLTLPSGEPVPCLLLANKSDLSPWAVSRDQIDRFSKENGFTGWTETSVKENKNINEAMRVLVEKMMNNSREDIMSSSTQGNYINLQTKPSPGWTCC</sequence>
<keyword id="KW-1003">Cell membrane</keyword>
<keyword id="KW-0963">Cytoplasm</keyword>
<keyword id="KW-0206">Cytoskeleton</keyword>
<keyword id="KW-0221">Differentiation</keyword>
<keyword id="KW-0333">Golgi apparatus</keyword>
<keyword id="KW-0342">GTP-binding</keyword>
<keyword id="KW-0449">Lipoprotein</keyword>
<keyword id="KW-0472">Membrane</keyword>
<keyword id="KW-0547">Nucleotide-binding</keyword>
<keyword id="KW-0597">Phosphoprotein</keyword>
<keyword id="KW-0636">Prenylation</keyword>
<keyword id="KW-0653">Protein transport</keyword>
<keyword id="KW-1185">Reference proteome</keyword>
<keyword id="KW-0813">Transport</keyword>
<comment type="function">
    <text evidence="2 3">The small GTPases Rab are key regulators in vesicle trafficking (PubMed:23395371). Essential for maintaining the integrity of endosome-trans-Golgi network structure (PubMed:23395371). Together with LRRK2, plays a role in the retrograde trafficking pathway for recycling proteins, such as mannose 6 phosphate receptor (M6PR), between lysosomes and the Golgi apparatus in a retromer-dependent manner (PubMed:23395371). Recruits LRRK2 to the Golgi apparatus and stimulates LRRK2 kinase activity (By similarity). Stimulates phosphorylation of RAB10 'Thr-73' by LRRK2 (By similarity). Regulates also neuronal process morphology in the intact central nervous system (CNS) (PubMed:23395371).</text>
</comment>
<comment type="subunit">
    <text evidence="3">Interacts with LRRK2 (via the N-terminus); this interaction is direct and stimulates kinase activity.</text>
</comment>
<comment type="interaction">
    <interactant intactId="EBI-6513837">
        <id>Q63481</id>
    </interactant>
    <interactant intactId="EBI-5323863">
        <id>Q5S007</id>
        <label>LRRK2</label>
    </interactant>
    <organismsDiffer>true</organismsDiffer>
    <experiments>3</experiments>
</comment>
<comment type="subcellular location">
    <subcellularLocation>
        <location evidence="5">Cell membrane</location>
        <topology evidence="5">Lipid-anchor</topology>
        <orientation evidence="5">Cytoplasmic side</orientation>
    </subcellularLocation>
    <subcellularLocation>
        <location evidence="2">Cytoplasm</location>
    </subcellularLocation>
    <subcellularLocation>
        <location evidence="2">Cytoplasm</location>
        <location evidence="2">Perinuclear region</location>
    </subcellularLocation>
    <subcellularLocation>
        <location evidence="3">Golgi apparatus</location>
    </subcellularLocation>
    <subcellularLocation>
        <location evidence="2">Golgi apparatus membrane</location>
    </subcellularLocation>
    <subcellularLocation>
        <location evidence="2">Golgi apparatus</location>
        <location evidence="2">trans-Golgi network</location>
    </subcellularLocation>
    <subcellularLocation>
        <location evidence="3">Cytoplasm</location>
        <location evidence="3">Cytoskeleton</location>
    </subcellularLocation>
    <text evidence="2 3">Colocalizes with GM130 at the Golgi apparatus (By similarity). Colocalizes with dynamic tubules emerging from and retracting to the Golgi apparatus (By similarity). Colocalizes with TGN46 at the trans-Golgi network (TGN) (By similarity). Colocalized with LRRK2 along tubular structures emerging from Golgi apparatus (PubMed:23395371).</text>
</comment>
<comment type="tissue specificity">
    <text evidence="4">Expressed predominantly in kidney and much less in brain, heart, muscle, fat, liver, spleen, adrenal gland, ovary, thymus and lung. Not expressed in testis and intestine.</text>
</comment>
<comment type="similarity">
    <text evidence="5">Belongs to the small GTPase superfamily. Rab family.</text>
</comment>
<proteinExistence type="evidence at protein level"/>
<reference key="1">
    <citation type="journal article" date="1997" name="Biochim. Biophys. Acta">
        <title>Cloning of two splicing variants of the novel Ras-related GTPase Rab29 which is predominately expressed in kidney.</title>
        <authorList>
            <person name="Massmann S."/>
            <person name="Schuermann A.H."/>
            <person name="Joost H.-G."/>
        </authorList>
    </citation>
    <scope>NUCLEOTIDE SEQUENCE [MRNA]</scope>
    <scope>TISSUE SPECIFICITY</scope>
    <source>
        <strain>Sprague-Dawley</strain>
        <tissue>Brain</tissue>
    </source>
</reference>
<reference key="2">
    <citation type="journal article" date="2013" name="Neuron">
        <title>RAB7L1 interacts with LRRK2 to modify intraneuronal protein sorting and Parkinson's disease risk.</title>
        <authorList>
            <person name="MacLeod D.A."/>
            <person name="Rhinn H."/>
            <person name="Kuwahara T."/>
            <person name="Zolin A."/>
            <person name="Di Paolo G."/>
            <person name="McCabe B.D."/>
            <person name="MacCabe B.D."/>
            <person name="Marder K.S."/>
            <person name="Honig L.S."/>
            <person name="Clark L.N."/>
            <person name="Small S.A."/>
            <person name="Abeliovich A."/>
        </authorList>
    </citation>
    <scope>FUNCTION IN RETROGRADE TRANSPORT</scope>
    <scope>INTERACTION WITH LRRK2</scope>
    <scope>SUBCELLULAR LOCATION</scope>
    <scope>MUTAGENESIS OF THR-21 AND GLN-67</scope>
</reference>
<accession>Q63481</accession>
<feature type="chain" id="PRO_0000276770" description="Ras-related protein Rab-7L1">
    <location>
        <begin position="1"/>
        <end position="204"/>
    </location>
</feature>
<feature type="short sequence motif" description="Effector region" evidence="1">
    <location>
        <begin position="36"/>
        <end position="44"/>
    </location>
</feature>
<feature type="binding site" evidence="2">
    <location>
        <position position="33"/>
    </location>
    <ligand>
        <name>GTP</name>
        <dbReference type="ChEBI" id="CHEBI:37565"/>
    </ligand>
</feature>
<feature type="binding site" evidence="2">
    <location>
        <position position="34"/>
    </location>
    <ligand>
        <name>GTP</name>
        <dbReference type="ChEBI" id="CHEBI:37565"/>
    </ligand>
</feature>
<feature type="binding site" evidence="2">
    <location>
        <position position="35"/>
    </location>
    <ligand>
        <name>GTP</name>
        <dbReference type="ChEBI" id="CHEBI:37565"/>
    </ligand>
</feature>
<feature type="binding site" evidence="2">
    <location>
        <position position="36"/>
    </location>
    <ligand>
        <name>GTP</name>
        <dbReference type="ChEBI" id="CHEBI:37565"/>
    </ligand>
</feature>
<feature type="binding site" evidence="2">
    <location>
        <position position="37"/>
    </location>
    <ligand>
        <name>GTP</name>
        <dbReference type="ChEBI" id="CHEBI:37565"/>
    </ligand>
</feature>
<feature type="binding site" evidence="2">
    <location>
        <position position="39"/>
    </location>
    <ligand>
        <name>GTP</name>
        <dbReference type="ChEBI" id="CHEBI:37565"/>
    </ligand>
</feature>
<feature type="binding site" evidence="2">
    <location>
        <position position="126"/>
    </location>
    <ligand>
        <name>GTP</name>
        <dbReference type="ChEBI" id="CHEBI:37565"/>
    </ligand>
</feature>
<feature type="binding site" evidence="2">
    <location>
        <position position="156"/>
    </location>
    <ligand>
        <name>GTP</name>
        <dbReference type="ChEBI" id="CHEBI:37565"/>
    </ligand>
</feature>
<feature type="binding site" evidence="2">
    <location>
        <position position="157"/>
    </location>
    <ligand>
        <name>GTP</name>
        <dbReference type="ChEBI" id="CHEBI:37565"/>
    </ligand>
</feature>
<feature type="modified residue" description="Phosphothreonine; by LRRK2" evidence="2">
    <location>
        <position position="71"/>
    </location>
</feature>
<feature type="modified residue" description="Phosphoserine" evidence="2">
    <location>
        <position position="72"/>
    </location>
</feature>
<feature type="lipid moiety-binding region" description="S-geranylgeranyl cysteine" evidence="1">
    <location>
        <position position="203"/>
    </location>
</feature>
<feature type="lipid moiety-binding region" description="S-geranylgeranyl cysteine" evidence="1">
    <location>
        <position position="204"/>
    </location>
</feature>
<feature type="mutagenesis site" description="Abolishes localization at trans-Golgi network (TGN) and affects the integrity of the TGN. Inhibits retrograde trafficking of M6PR-associated vesicles." evidence="3">
    <original>T</original>
    <variation>N</variation>
    <location>
        <position position="21"/>
    </location>
</feature>
<feature type="mutagenesis site" description="Localizes predominantly in the cytosol." evidence="3">
    <original>Q</original>
    <variation>L</variation>
    <location>
        <position position="67"/>
    </location>
</feature>
<evidence type="ECO:0000250" key="1"/>
<evidence type="ECO:0000250" key="2">
    <source>
        <dbReference type="UniProtKB" id="O14966"/>
    </source>
</evidence>
<evidence type="ECO:0000269" key="3">
    <source>
    </source>
</evidence>
<evidence type="ECO:0000269" key="4">
    <source>
    </source>
</evidence>
<evidence type="ECO:0000305" key="5"/>
<gene>
    <name type="primary">Rab29</name>
    <name type="synonym">Rab7l1</name>
</gene>
<organism>
    <name type="scientific">Rattus norvegicus</name>
    <name type="common">Rat</name>
    <dbReference type="NCBI Taxonomy" id="10116"/>
    <lineage>
        <taxon>Eukaryota</taxon>
        <taxon>Metazoa</taxon>
        <taxon>Chordata</taxon>
        <taxon>Craniata</taxon>
        <taxon>Vertebrata</taxon>
        <taxon>Euteleostomi</taxon>
        <taxon>Mammalia</taxon>
        <taxon>Eutheria</taxon>
        <taxon>Euarchontoglires</taxon>
        <taxon>Glires</taxon>
        <taxon>Rodentia</taxon>
        <taxon>Myomorpha</taxon>
        <taxon>Muroidea</taxon>
        <taxon>Muridae</taxon>
        <taxon>Murinae</taxon>
        <taxon>Rattus</taxon>
    </lineage>
</organism>
<name>RAB7L_RAT</name>
<dbReference type="EMBL" id="X96663">
    <property type="protein sequence ID" value="CAA65444.1"/>
    <property type="molecule type" value="mRNA"/>
</dbReference>
<dbReference type="RefSeq" id="NP_598274.1">
    <property type="nucleotide sequence ID" value="NM_133590.1"/>
</dbReference>
<dbReference type="RefSeq" id="XP_006249806.1">
    <property type="nucleotide sequence ID" value="XM_006249744.5"/>
</dbReference>
<dbReference type="RefSeq" id="XP_006249807.1">
    <property type="nucleotide sequence ID" value="XM_006249745.5"/>
</dbReference>
<dbReference type="SMR" id="Q63481"/>
<dbReference type="DIP" id="DIP-60518N"/>
<dbReference type="FunCoup" id="Q63481">
    <property type="interactions" value="205"/>
</dbReference>
<dbReference type="IntAct" id="Q63481">
    <property type="interactions" value="2"/>
</dbReference>
<dbReference type="STRING" id="10116.ENSRNOP00000067600"/>
<dbReference type="CarbonylDB" id="Q63481"/>
<dbReference type="iPTMnet" id="Q63481"/>
<dbReference type="PhosphoSitePlus" id="Q63481"/>
<dbReference type="PaxDb" id="10116-ENSRNOP00000067600"/>
<dbReference type="Ensembl" id="ENSRNOT00000073669.2">
    <property type="protein sequence ID" value="ENSRNOP00000067600.1"/>
    <property type="gene ID" value="ENSRNOG00000049641.3"/>
</dbReference>
<dbReference type="GeneID" id="171122"/>
<dbReference type="KEGG" id="rno:171122"/>
<dbReference type="AGR" id="RGD:620892"/>
<dbReference type="CTD" id="8934"/>
<dbReference type="RGD" id="620892">
    <property type="gene designation" value="Rab29"/>
</dbReference>
<dbReference type="eggNOG" id="KOG4423">
    <property type="taxonomic scope" value="Eukaryota"/>
</dbReference>
<dbReference type="GeneTree" id="ENSGT00940000159363"/>
<dbReference type="InParanoid" id="Q63481"/>
<dbReference type="OMA" id="NNFIGWT"/>
<dbReference type="OrthoDB" id="245989at2759"/>
<dbReference type="PhylomeDB" id="Q63481"/>
<dbReference type="Reactome" id="R-RNO-8873719">
    <property type="pathway name" value="RAB geranylgeranylation"/>
</dbReference>
<dbReference type="PRO" id="PR:Q63481"/>
<dbReference type="Proteomes" id="UP000002494">
    <property type="component" value="Chromosome 13"/>
</dbReference>
<dbReference type="Bgee" id="ENSRNOG00000049641">
    <property type="expression patterns" value="Expressed in kidney and 20 other cell types or tissues"/>
</dbReference>
<dbReference type="ExpressionAtlas" id="Q63481">
    <property type="expression patterns" value="baseline and differential"/>
</dbReference>
<dbReference type="GO" id="GO:0005801">
    <property type="term" value="C:cis-Golgi network"/>
    <property type="evidence" value="ECO:0000266"/>
    <property type="project" value="RGD"/>
</dbReference>
<dbReference type="GO" id="GO:0005737">
    <property type="term" value="C:cytoplasm"/>
    <property type="evidence" value="ECO:0000250"/>
    <property type="project" value="UniProtKB"/>
</dbReference>
<dbReference type="GO" id="GO:0005856">
    <property type="term" value="C:cytoskeleton"/>
    <property type="evidence" value="ECO:0007669"/>
    <property type="project" value="UniProtKB-SubCell"/>
</dbReference>
<dbReference type="GO" id="GO:0005829">
    <property type="term" value="C:cytosol"/>
    <property type="evidence" value="ECO:0007669"/>
    <property type="project" value="Ensembl"/>
</dbReference>
<dbReference type="GO" id="GO:0005769">
    <property type="term" value="C:early endosome"/>
    <property type="evidence" value="ECO:0000266"/>
    <property type="project" value="RGD"/>
</dbReference>
<dbReference type="GO" id="GO:0012505">
    <property type="term" value="C:endomembrane system"/>
    <property type="evidence" value="ECO:0000318"/>
    <property type="project" value="GO_Central"/>
</dbReference>
<dbReference type="GO" id="GO:0005794">
    <property type="term" value="C:Golgi apparatus"/>
    <property type="evidence" value="ECO:0000314"/>
    <property type="project" value="ParkinsonsUK-UCL"/>
</dbReference>
<dbReference type="GO" id="GO:0000139">
    <property type="term" value="C:Golgi membrane"/>
    <property type="evidence" value="ECO:0007669"/>
    <property type="project" value="UniProtKB-SubCell"/>
</dbReference>
<dbReference type="GO" id="GO:0097708">
    <property type="term" value="C:intracellular vesicle"/>
    <property type="evidence" value="ECO:0000266"/>
    <property type="project" value="RGD"/>
</dbReference>
<dbReference type="GO" id="GO:0042470">
    <property type="term" value="C:melanosome"/>
    <property type="evidence" value="ECO:0000318"/>
    <property type="project" value="GO_Central"/>
</dbReference>
<dbReference type="GO" id="GO:0005739">
    <property type="term" value="C:mitochondrion"/>
    <property type="evidence" value="ECO:0000266"/>
    <property type="project" value="RGD"/>
</dbReference>
<dbReference type="GO" id="GO:0031965">
    <property type="term" value="C:nuclear membrane"/>
    <property type="evidence" value="ECO:0007669"/>
    <property type="project" value="Ensembl"/>
</dbReference>
<dbReference type="GO" id="GO:0005654">
    <property type="term" value="C:nucleoplasm"/>
    <property type="evidence" value="ECO:0007669"/>
    <property type="project" value="Ensembl"/>
</dbReference>
<dbReference type="GO" id="GO:0048471">
    <property type="term" value="C:perinuclear region of cytoplasm"/>
    <property type="evidence" value="ECO:0007669"/>
    <property type="project" value="UniProtKB-SubCell"/>
</dbReference>
<dbReference type="GO" id="GO:0005886">
    <property type="term" value="C:plasma membrane"/>
    <property type="evidence" value="ECO:0007669"/>
    <property type="project" value="UniProtKB-SubCell"/>
</dbReference>
<dbReference type="GO" id="GO:0055037">
    <property type="term" value="C:recycling endosome"/>
    <property type="evidence" value="ECO:0000266"/>
    <property type="project" value="RGD"/>
</dbReference>
<dbReference type="GO" id="GO:0005802">
    <property type="term" value="C:trans-Golgi network"/>
    <property type="evidence" value="ECO:0000250"/>
    <property type="project" value="UniProtKB"/>
</dbReference>
<dbReference type="GO" id="GO:0005773">
    <property type="term" value="C:vacuole"/>
    <property type="evidence" value="ECO:0000266"/>
    <property type="project" value="RGD"/>
</dbReference>
<dbReference type="GO" id="GO:0031982">
    <property type="term" value="C:vesicle"/>
    <property type="evidence" value="ECO:0000266"/>
    <property type="project" value="RGD"/>
</dbReference>
<dbReference type="GO" id="GO:0070840">
    <property type="term" value="F:dynein complex binding"/>
    <property type="evidence" value="ECO:0000266"/>
    <property type="project" value="RGD"/>
</dbReference>
<dbReference type="GO" id="GO:0019003">
    <property type="term" value="F:GDP binding"/>
    <property type="evidence" value="ECO:0000314"/>
    <property type="project" value="RGD"/>
</dbReference>
<dbReference type="GO" id="GO:0005525">
    <property type="term" value="F:GTP binding"/>
    <property type="evidence" value="ECO:0000314"/>
    <property type="project" value="RGD"/>
</dbReference>
<dbReference type="GO" id="GO:0003924">
    <property type="term" value="F:GTPase activity"/>
    <property type="evidence" value="ECO:0000318"/>
    <property type="project" value="GO_Central"/>
</dbReference>
<dbReference type="GO" id="GO:0019894">
    <property type="term" value="F:kinesin binding"/>
    <property type="evidence" value="ECO:0000266"/>
    <property type="project" value="RGD"/>
</dbReference>
<dbReference type="GO" id="GO:0031267">
    <property type="term" value="F:small GTPase binding"/>
    <property type="evidence" value="ECO:0000266"/>
    <property type="project" value="RGD"/>
</dbReference>
<dbReference type="GO" id="GO:0030154">
    <property type="term" value="P:cell differentiation"/>
    <property type="evidence" value="ECO:0007669"/>
    <property type="project" value="UniProtKB-KW"/>
</dbReference>
<dbReference type="GO" id="GO:1990748">
    <property type="term" value="P:cellular detoxification"/>
    <property type="evidence" value="ECO:0000266"/>
    <property type="project" value="RGD"/>
</dbReference>
<dbReference type="GO" id="GO:0060271">
    <property type="term" value="P:cilium assembly"/>
    <property type="evidence" value="ECO:0000266"/>
    <property type="project" value="RGD"/>
</dbReference>
<dbReference type="GO" id="GO:0007030">
    <property type="term" value="P:Golgi organization"/>
    <property type="evidence" value="ECO:0000250"/>
    <property type="project" value="UniProtKB"/>
</dbReference>
<dbReference type="GO" id="GO:0006886">
    <property type="term" value="P:intracellular protein transport"/>
    <property type="evidence" value="ECO:0000318"/>
    <property type="project" value="GO_Central"/>
</dbReference>
<dbReference type="GO" id="GO:0032438">
    <property type="term" value="P:melanosome organization"/>
    <property type="evidence" value="ECO:0000318"/>
    <property type="project" value="GO_Central"/>
</dbReference>
<dbReference type="GO" id="GO:0007005">
    <property type="term" value="P:mitochondrion organization"/>
    <property type="evidence" value="ECO:0000266"/>
    <property type="project" value="RGD"/>
</dbReference>
<dbReference type="GO" id="GO:0044788">
    <property type="term" value="P:modulation by host of viral process"/>
    <property type="evidence" value="ECO:0007669"/>
    <property type="project" value="Ensembl"/>
</dbReference>
<dbReference type="GO" id="GO:0010977">
    <property type="term" value="P:negative regulation of neuron projection development"/>
    <property type="evidence" value="ECO:0000266"/>
    <property type="project" value="RGD"/>
</dbReference>
<dbReference type="GO" id="GO:0090316">
    <property type="term" value="P:positive regulation of intracellular protein transport"/>
    <property type="evidence" value="ECO:0000250"/>
    <property type="project" value="UniProtKB"/>
</dbReference>
<dbReference type="GO" id="GO:0001921">
    <property type="term" value="P:positive regulation of receptor recycling"/>
    <property type="evidence" value="ECO:0000266"/>
    <property type="project" value="RGD"/>
</dbReference>
<dbReference type="GO" id="GO:0050862">
    <property type="term" value="P:positive regulation of T cell receptor signaling pathway"/>
    <property type="evidence" value="ECO:0000266"/>
    <property type="project" value="RGD"/>
</dbReference>
<dbReference type="GO" id="GO:1903441">
    <property type="term" value="P:protein localization to ciliary membrane"/>
    <property type="evidence" value="ECO:0000266"/>
    <property type="project" value="RGD"/>
</dbReference>
<dbReference type="GO" id="GO:0072657">
    <property type="term" value="P:protein localization to membrane"/>
    <property type="evidence" value="ECO:0000266"/>
    <property type="project" value="RGD"/>
</dbReference>
<dbReference type="GO" id="GO:1905279">
    <property type="term" value="P:regulation of retrograde transport, endosome to Golgi"/>
    <property type="evidence" value="ECO:0000315"/>
    <property type="project" value="ParkinsonsUK-UCL"/>
</dbReference>
<dbReference type="GO" id="GO:0009617">
    <property type="term" value="P:response to bacterium"/>
    <property type="evidence" value="ECO:0007669"/>
    <property type="project" value="Ensembl"/>
</dbReference>
<dbReference type="GO" id="GO:0042147">
    <property type="term" value="P:retrograde transport, endosome to Golgi"/>
    <property type="evidence" value="ECO:0000250"/>
    <property type="project" value="UniProtKB"/>
</dbReference>
<dbReference type="GO" id="GO:0007416">
    <property type="term" value="P:synapse assembly"/>
    <property type="evidence" value="ECO:0000266"/>
    <property type="project" value="RGD"/>
</dbReference>
<dbReference type="GO" id="GO:0042110">
    <property type="term" value="P:T cell activation"/>
    <property type="evidence" value="ECO:0000266"/>
    <property type="project" value="RGD"/>
</dbReference>
<dbReference type="CDD" id="cd04107">
    <property type="entry name" value="Rab32_Rab38"/>
    <property type="match status" value="1"/>
</dbReference>
<dbReference type="FunFam" id="3.40.50.300:FF:000222">
    <property type="entry name" value="RAB32, member RAS oncogene family"/>
    <property type="match status" value="1"/>
</dbReference>
<dbReference type="Gene3D" id="3.40.50.300">
    <property type="entry name" value="P-loop containing nucleotide triphosphate hydrolases"/>
    <property type="match status" value="1"/>
</dbReference>
<dbReference type="InterPro" id="IPR027417">
    <property type="entry name" value="P-loop_NTPase"/>
</dbReference>
<dbReference type="InterPro" id="IPR030697">
    <property type="entry name" value="Rab29/Rab38/Rab32"/>
</dbReference>
<dbReference type="InterPro" id="IPR005225">
    <property type="entry name" value="Small_GTP-bd"/>
</dbReference>
<dbReference type="InterPro" id="IPR001806">
    <property type="entry name" value="Small_GTPase"/>
</dbReference>
<dbReference type="NCBIfam" id="TIGR00231">
    <property type="entry name" value="small_GTP"/>
    <property type="match status" value="1"/>
</dbReference>
<dbReference type="PANTHER" id="PTHR47981">
    <property type="entry name" value="RAB FAMILY"/>
    <property type="match status" value="1"/>
</dbReference>
<dbReference type="PANTHER" id="PTHR47981:SF42">
    <property type="entry name" value="RAS-RELATED PROTEIN RAB-7L1-LIKE ISOFORM X1"/>
    <property type="match status" value="1"/>
</dbReference>
<dbReference type="Pfam" id="PF00071">
    <property type="entry name" value="Ras"/>
    <property type="match status" value="1"/>
</dbReference>
<dbReference type="PRINTS" id="PR00449">
    <property type="entry name" value="RASTRNSFRMNG"/>
</dbReference>
<dbReference type="SMART" id="SM00175">
    <property type="entry name" value="RAB"/>
    <property type="match status" value="1"/>
</dbReference>
<dbReference type="SMART" id="SM00176">
    <property type="entry name" value="RAN"/>
    <property type="match status" value="1"/>
</dbReference>
<dbReference type="SMART" id="SM00173">
    <property type="entry name" value="RAS"/>
    <property type="match status" value="1"/>
</dbReference>
<dbReference type="SMART" id="SM00174">
    <property type="entry name" value="RHO"/>
    <property type="match status" value="1"/>
</dbReference>
<dbReference type="SUPFAM" id="SSF52540">
    <property type="entry name" value="P-loop containing nucleoside triphosphate hydrolases"/>
    <property type="match status" value="1"/>
</dbReference>
<dbReference type="PROSITE" id="PS51419">
    <property type="entry name" value="RAB"/>
    <property type="match status" value="1"/>
</dbReference>